<accession>A5VA70</accession>
<name>DCUP_RHIWR</name>
<dbReference type="EC" id="4.1.1.37" evidence="1"/>
<dbReference type="EMBL" id="CP000699">
    <property type="protein sequence ID" value="ABQ69186.1"/>
    <property type="molecule type" value="Genomic_DNA"/>
</dbReference>
<dbReference type="SMR" id="A5VA70"/>
<dbReference type="STRING" id="392499.Swit_2833"/>
<dbReference type="PaxDb" id="392499-Swit_2833"/>
<dbReference type="KEGG" id="swi:Swit_2833"/>
<dbReference type="eggNOG" id="COG0407">
    <property type="taxonomic scope" value="Bacteria"/>
</dbReference>
<dbReference type="HOGENOM" id="CLU_040933_0_0_5"/>
<dbReference type="OrthoDB" id="9806656at2"/>
<dbReference type="UniPathway" id="UPA00251">
    <property type="reaction ID" value="UER00321"/>
</dbReference>
<dbReference type="Proteomes" id="UP000001989">
    <property type="component" value="Chromosome"/>
</dbReference>
<dbReference type="GO" id="GO:0005829">
    <property type="term" value="C:cytosol"/>
    <property type="evidence" value="ECO:0007669"/>
    <property type="project" value="TreeGrafter"/>
</dbReference>
<dbReference type="GO" id="GO:0004853">
    <property type="term" value="F:uroporphyrinogen decarboxylase activity"/>
    <property type="evidence" value="ECO:0007669"/>
    <property type="project" value="UniProtKB-UniRule"/>
</dbReference>
<dbReference type="GO" id="GO:0019353">
    <property type="term" value="P:protoporphyrinogen IX biosynthetic process from glutamate"/>
    <property type="evidence" value="ECO:0007669"/>
    <property type="project" value="TreeGrafter"/>
</dbReference>
<dbReference type="CDD" id="cd00717">
    <property type="entry name" value="URO-D"/>
    <property type="match status" value="1"/>
</dbReference>
<dbReference type="Gene3D" id="3.20.20.210">
    <property type="match status" value="1"/>
</dbReference>
<dbReference type="HAMAP" id="MF_00218">
    <property type="entry name" value="URO_D"/>
    <property type="match status" value="1"/>
</dbReference>
<dbReference type="InterPro" id="IPR038071">
    <property type="entry name" value="UROD/MetE-like_sf"/>
</dbReference>
<dbReference type="InterPro" id="IPR006361">
    <property type="entry name" value="Uroporphyrinogen_deCO2ase_HemE"/>
</dbReference>
<dbReference type="InterPro" id="IPR000257">
    <property type="entry name" value="Uroporphyrinogen_deCOase"/>
</dbReference>
<dbReference type="NCBIfam" id="TIGR01464">
    <property type="entry name" value="hemE"/>
    <property type="match status" value="1"/>
</dbReference>
<dbReference type="PANTHER" id="PTHR21091">
    <property type="entry name" value="METHYLTETRAHYDROFOLATE:HOMOCYSTEINE METHYLTRANSFERASE RELATED"/>
    <property type="match status" value="1"/>
</dbReference>
<dbReference type="PANTHER" id="PTHR21091:SF169">
    <property type="entry name" value="UROPORPHYRINOGEN DECARBOXYLASE"/>
    <property type="match status" value="1"/>
</dbReference>
<dbReference type="Pfam" id="PF01208">
    <property type="entry name" value="URO-D"/>
    <property type="match status" value="1"/>
</dbReference>
<dbReference type="SUPFAM" id="SSF51726">
    <property type="entry name" value="UROD/MetE-like"/>
    <property type="match status" value="1"/>
</dbReference>
<dbReference type="PROSITE" id="PS00906">
    <property type="entry name" value="UROD_1"/>
    <property type="match status" value="1"/>
</dbReference>
<dbReference type="PROSITE" id="PS00907">
    <property type="entry name" value="UROD_2"/>
    <property type="match status" value="1"/>
</dbReference>
<keyword id="KW-0963">Cytoplasm</keyword>
<keyword id="KW-0210">Decarboxylase</keyword>
<keyword id="KW-0456">Lyase</keyword>
<keyword id="KW-0627">Porphyrin biosynthesis</keyword>
<keyword id="KW-1185">Reference proteome</keyword>
<sequence length="344" mass="37164">MAALPAETRPLLAVLRGERRDPPPVWLMRQAGRYLPEYRALRETKGGFLELAYDSDAAAEITLQPIRRFGFDGAILFSDILIIPHAMGQDLRFEAGEGPRLSPTLVDRTLADLEPVPARLEPIYGTVRRVRAALPAETTFLGFAGSPWTVATYMVAGQGSREQAETRRKAYRDPAGFQAIIDALVDATADYLSKQIEAGVDAVQLFDSWAGSLAPREFERWVIAPTAQLVRRLHARHPGVPVIGFPKGAGGKLPAYARETGVDAVGLDETVDPAWAHANLPEGLTVQGNLDPLALVSGGEGLDTAVDAILGAFPGRPHVFNLGHGILLDTPIAHVERLLARVRG</sequence>
<comment type="function">
    <text evidence="1">Catalyzes the decarboxylation of four acetate groups of uroporphyrinogen-III to yield coproporphyrinogen-III.</text>
</comment>
<comment type="catalytic activity">
    <reaction evidence="1">
        <text>uroporphyrinogen III + 4 H(+) = coproporphyrinogen III + 4 CO2</text>
        <dbReference type="Rhea" id="RHEA:19865"/>
        <dbReference type="ChEBI" id="CHEBI:15378"/>
        <dbReference type="ChEBI" id="CHEBI:16526"/>
        <dbReference type="ChEBI" id="CHEBI:57308"/>
        <dbReference type="ChEBI" id="CHEBI:57309"/>
        <dbReference type="EC" id="4.1.1.37"/>
    </reaction>
</comment>
<comment type="pathway">
    <text evidence="1">Porphyrin-containing compound metabolism; protoporphyrin-IX biosynthesis; coproporphyrinogen-III from 5-aminolevulinate: step 4/4.</text>
</comment>
<comment type="subunit">
    <text evidence="1">Homodimer.</text>
</comment>
<comment type="subcellular location">
    <subcellularLocation>
        <location evidence="1">Cytoplasm</location>
    </subcellularLocation>
</comment>
<comment type="similarity">
    <text evidence="1">Belongs to the uroporphyrinogen decarboxylase family.</text>
</comment>
<feature type="chain" id="PRO_0000325697" description="Uroporphyrinogen decarboxylase">
    <location>
        <begin position="1"/>
        <end position="344"/>
    </location>
</feature>
<feature type="binding site" evidence="1">
    <location>
        <begin position="29"/>
        <end position="33"/>
    </location>
    <ligand>
        <name>substrate</name>
    </ligand>
</feature>
<feature type="binding site" evidence="1">
    <location>
        <position position="79"/>
    </location>
    <ligand>
        <name>substrate</name>
    </ligand>
</feature>
<feature type="binding site" evidence="1">
    <location>
        <position position="153"/>
    </location>
    <ligand>
        <name>substrate</name>
    </ligand>
</feature>
<feature type="binding site" evidence="1">
    <location>
        <position position="208"/>
    </location>
    <ligand>
        <name>substrate</name>
    </ligand>
</feature>
<feature type="binding site" evidence="1">
    <location>
        <position position="324"/>
    </location>
    <ligand>
        <name>substrate</name>
    </ligand>
</feature>
<feature type="site" description="Transition state stabilizer" evidence="1">
    <location>
        <position position="79"/>
    </location>
</feature>
<reference key="1">
    <citation type="journal article" date="2010" name="J. Bacteriol.">
        <title>Genome sequence of the dioxin-mineralizing bacterium Sphingomonas wittichii RW1.</title>
        <authorList>
            <person name="Miller T.R."/>
            <person name="Delcher A.L."/>
            <person name="Salzberg S.L."/>
            <person name="Saunders E."/>
            <person name="Detter J.C."/>
            <person name="Halden R.U."/>
        </authorList>
    </citation>
    <scope>NUCLEOTIDE SEQUENCE [LARGE SCALE GENOMIC DNA]</scope>
    <source>
        <strain>DSM 6014 / CCUG 31198 / JCM 15750 / NBRC 105917 / EY 4224 / RW1</strain>
    </source>
</reference>
<proteinExistence type="inferred from homology"/>
<organism>
    <name type="scientific">Rhizorhabdus wittichii (strain DSM 6014 / CCUG 31198 / JCM 15750 / NBRC 105917 / EY 4224 / RW1)</name>
    <name type="common">Sphingomonas wittichii</name>
    <dbReference type="NCBI Taxonomy" id="392499"/>
    <lineage>
        <taxon>Bacteria</taxon>
        <taxon>Pseudomonadati</taxon>
        <taxon>Pseudomonadota</taxon>
        <taxon>Alphaproteobacteria</taxon>
        <taxon>Sphingomonadales</taxon>
        <taxon>Sphingomonadaceae</taxon>
        <taxon>Rhizorhabdus</taxon>
    </lineage>
</organism>
<protein>
    <recommendedName>
        <fullName evidence="1">Uroporphyrinogen decarboxylase</fullName>
        <shortName evidence="1">UPD</shortName>
        <shortName evidence="1">URO-D</shortName>
        <ecNumber evidence="1">4.1.1.37</ecNumber>
    </recommendedName>
</protein>
<gene>
    <name evidence="1" type="primary">hemE</name>
    <name type="ordered locus">Swit_2833</name>
</gene>
<evidence type="ECO:0000255" key="1">
    <source>
        <dbReference type="HAMAP-Rule" id="MF_00218"/>
    </source>
</evidence>